<sequence>MSEGIDIKELKRRMDGAVSAFKSDIASLRTGRASANILDPVTIEAYGSRVPLNQVANITVPEPRMLTVSVWDKSMVSAVERGIRESNLGLNPIVDGQSLRIPLPELNEERRKSLVKVAHDYAEKSKVAIRHVRRDGMDGLKKAEKDGVIGQDESRAQSERVQKMTDETISEIDRLLGEKEKEIMQV</sequence>
<evidence type="ECO:0000255" key="1">
    <source>
        <dbReference type="HAMAP-Rule" id="MF_00040"/>
    </source>
</evidence>
<evidence type="ECO:0000256" key="2">
    <source>
        <dbReference type="SAM" id="MobiDB-lite"/>
    </source>
</evidence>
<feature type="chain" id="PRO_1000003243" description="Ribosome-recycling factor">
    <location>
        <begin position="1"/>
        <end position="186"/>
    </location>
</feature>
<feature type="region of interest" description="Disordered" evidence="2">
    <location>
        <begin position="144"/>
        <end position="163"/>
    </location>
</feature>
<protein>
    <recommendedName>
        <fullName evidence="1">Ribosome-recycling factor</fullName>
        <shortName evidence="1">RRF</shortName>
    </recommendedName>
    <alternativeName>
        <fullName evidence="1">Ribosome-releasing factor</fullName>
    </alternativeName>
</protein>
<reference key="1">
    <citation type="journal article" date="2006" name="Proc. Natl. Acad. Sci. U.S.A.">
        <title>The partitioned Rhizobium etli genome: genetic and metabolic redundancy in seven interacting replicons.</title>
        <authorList>
            <person name="Gonzalez V."/>
            <person name="Santamaria R.I."/>
            <person name="Bustos P."/>
            <person name="Hernandez-Gonzalez I."/>
            <person name="Medrano-Soto A."/>
            <person name="Moreno-Hagelsieb G."/>
            <person name="Janga S.C."/>
            <person name="Ramirez M.A."/>
            <person name="Jimenez-Jacinto V."/>
            <person name="Collado-Vides J."/>
            <person name="Davila G."/>
        </authorList>
    </citation>
    <scope>NUCLEOTIDE SEQUENCE [LARGE SCALE GENOMIC DNA]</scope>
    <source>
        <strain>ATCC 51251 / DSM 11541 / JCM 21823 / NBRC 15573 / CFN 42</strain>
    </source>
</reference>
<accession>Q2K8Y4</accession>
<gene>
    <name evidence="1" type="primary">frr</name>
    <name type="ordered locus">RHE_CH01916</name>
</gene>
<proteinExistence type="inferred from homology"/>
<organism>
    <name type="scientific">Rhizobium etli (strain ATCC 51251 / DSM 11541 / JCM 21823 / NBRC 15573 / CFN 42)</name>
    <dbReference type="NCBI Taxonomy" id="347834"/>
    <lineage>
        <taxon>Bacteria</taxon>
        <taxon>Pseudomonadati</taxon>
        <taxon>Pseudomonadota</taxon>
        <taxon>Alphaproteobacteria</taxon>
        <taxon>Hyphomicrobiales</taxon>
        <taxon>Rhizobiaceae</taxon>
        <taxon>Rhizobium/Agrobacterium group</taxon>
        <taxon>Rhizobium</taxon>
    </lineage>
</organism>
<keyword id="KW-0963">Cytoplasm</keyword>
<keyword id="KW-0648">Protein biosynthesis</keyword>
<keyword id="KW-1185">Reference proteome</keyword>
<comment type="function">
    <text evidence="1">Responsible for the release of ribosomes from messenger RNA at the termination of protein biosynthesis. May increase the efficiency of translation by recycling ribosomes from one round of translation to another.</text>
</comment>
<comment type="subcellular location">
    <subcellularLocation>
        <location evidence="1">Cytoplasm</location>
    </subcellularLocation>
</comment>
<comment type="similarity">
    <text evidence="1">Belongs to the RRF family.</text>
</comment>
<name>RRF_RHIEC</name>
<dbReference type="EMBL" id="CP000133">
    <property type="protein sequence ID" value="ABC90702.1"/>
    <property type="molecule type" value="Genomic_DNA"/>
</dbReference>
<dbReference type="RefSeq" id="WP_004678618.1">
    <property type="nucleotide sequence ID" value="NC_007761.1"/>
</dbReference>
<dbReference type="SMR" id="Q2K8Y4"/>
<dbReference type="GeneID" id="91148414"/>
<dbReference type="KEGG" id="ret:RHE_CH01916"/>
<dbReference type="eggNOG" id="COG0233">
    <property type="taxonomic scope" value="Bacteria"/>
</dbReference>
<dbReference type="HOGENOM" id="CLU_073981_2_0_5"/>
<dbReference type="OrthoDB" id="9804006at2"/>
<dbReference type="Proteomes" id="UP000001936">
    <property type="component" value="Chromosome"/>
</dbReference>
<dbReference type="GO" id="GO:0005829">
    <property type="term" value="C:cytosol"/>
    <property type="evidence" value="ECO:0007669"/>
    <property type="project" value="GOC"/>
</dbReference>
<dbReference type="GO" id="GO:0043023">
    <property type="term" value="F:ribosomal large subunit binding"/>
    <property type="evidence" value="ECO:0007669"/>
    <property type="project" value="TreeGrafter"/>
</dbReference>
<dbReference type="GO" id="GO:0002184">
    <property type="term" value="P:cytoplasmic translational termination"/>
    <property type="evidence" value="ECO:0007669"/>
    <property type="project" value="TreeGrafter"/>
</dbReference>
<dbReference type="CDD" id="cd00520">
    <property type="entry name" value="RRF"/>
    <property type="match status" value="1"/>
</dbReference>
<dbReference type="FunFam" id="1.10.132.20:FF:000001">
    <property type="entry name" value="Ribosome-recycling factor"/>
    <property type="match status" value="1"/>
</dbReference>
<dbReference type="FunFam" id="3.30.1360.40:FF:000001">
    <property type="entry name" value="Ribosome-recycling factor"/>
    <property type="match status" value="1"/>
</dbReference>
<dbReference type="Gene3D" id="3.30.1360.40">
    <property type="match status" value="1"/>
</dbReference>
<dbReference type="Gene3D" id="1.10.132.20">
    <property type="entry name" value="Ribosome-recycling factor"/>
    <property type="match status" value="1"/>
</dbReference>
<dbReference type="HAMAP" id="MF_00040">
    <property type="entry name" value="RRF"/>
    <property type="match status" value="1"/>
</dbReference>
<dbReference type="InterPro" id="IPR002661">
    <property type="entry name" value="Ribosome_recyc_fac"/>
</dbReference>
<dbReference type="InterPro" id="IPR023584">
    <property type="entry name" value="Ribosome_recyc_fac_dom"/>
</dbReference>
<dbReference type="InterPro" id="IPR036191">
    <property type="entry name" value="RRF_sf"/>
</dbReference>
<dbReference type="NCBIfam" id="TIGR00496">
    <property type="entry name" value="frr"/>
    <property type="match status" value="1"/>
</dbReference>
<dbReference type="PANTHER" id="PTHR20982:SF3">
    <property type="entry name" value="MITOCHONDRIAL RIBOSOME RECYCLING FACTOR PSEUDO 1"/>
    <property type="match status" value="1"/>
</dbReference>
<dbReference type="PANTHER" id="PTHR20982">
    <property type="entry name" value="RIBOSOME RECYCLING FACTOR"/>
    <property type="match status" value="1"/>
</dbReference>
<dbReference type="Pfam" id="PF01765">
    <property type="entry name" value="RRF"/>
    <property type="match status" value="1"/>
</dbReference>
<dbReference type="SUPFAM" id="SSF55194">
    <property type="entry name" value="Ribosome recycling factor, RRF"/>
    <property type="match status" value="1"/>
</dbReference>